<accession>B5E4X3</accession>
<reference key="1">
    <citation type="journal article" date="2001" name="Microb. Drug Resist.">
        <title>Annotated draft genomic sequence from a Streptococcus pneumoniae type 19F clinical isolate.</title>
        <authorList>
            <person name="Dopazo J."/>
            <person name="Mendoza A."/>
            <person name="Herrero J."/>
            <person name="Caldara F."/>
            <person name="Humbert Y."/>
            <person name="Friedli L."/>
            <person name="Guerrier M."/>
            <person name="Grand-Schenk E."/>
            <person name="Gandin C."/>
            <person name="de Francesco M."/>
            <person name="Polissi A."/>
            <person name="Buell G."/>
            <person name="Feger G."/>
            <person name="Garcia E."/>
            <person name="Peitsch M."/>
            <person name="Garcia-Bustos J.F."/>
        </authorList>
    </citation>
    <scope>NUCLEOTIDE SEQUENCE [LARGE SCALE GENOMIC DNA]</scope>
    <source>
        <strain>G54</strain>
    </source>
</reference>
<reference key="2">
    <citation type="submission" date="2008-03" db="EMBL/GenBank/DDBJ databases">
        <title>Pneumococcal beta glucoside metabolism investigated by whole genome comparison.</title>
        <authorList>
            <person name="Mulas L."/>
            <person name="Trappetti C."/>
            <person name="Hakenbeck R."/>
            <person name="Iannelli F."/>
            <person name="Pozzi G."/>
            <person name="Davidsen T.M."/>
            <person name="Tettelin H."/>
            <person name="Oggioni M."/>
        </authorList>
    </citation>
    <scope>NUCLEOTIDE SEQUENCE [LARGE SCALE GENOMIC DNA]</scope>
    <source>
        <strain>G54</strain>
    </source>
</reference>
<proteinExistence type="inferred from homology"/>
<protein>
    <recommendedName>
        <fullName evidence="1">UvrABC system protein B</fullName>
        <shortName evidence="1">Protein UvrB</shortName>
    </recommendedName>
    <alternativeName>
        <fullName evidence="1">Excinuclease ABC subunit B</fullName>
    </alternativeName>
</protein>
<organism>
    <name type="scientific">Streptococcus pneumoniae serotype 19F (strain G54)</name>
    <dbReference type="NCBI Taxonomy" id="512566"/>
    <lineage>
        <taxon>Bacteria</taxon>
        <taxon>Bacillati</taxon>
        <taxon>Bacillota</taxon>
        <taxon>Bacilli</taxon>
        <taxon>Lactobacillales</taxon>
        <taxon>Streptococcaceae</taxon>
        <taxon>Streptococcus</taxon>
    </lineage>
</organism>
<name>UVRB_STRP4</name>
<gene>
    <name evidence="1" type="primary">uvrB</name>
    <name type="ordered locus">SPG_1129</name>
</gene>
<evidence type="ECO:0000255" key="1">
    <source>
        <dbReference type="HAMAP-Rule" id="MF_00204"/>
    </source>
</evidence>
<feature type="chain" id="PRO_1000099570" description="UvrABC system protein B">
    <location>
        <begin position="1"/>
        <end position="662"/>
    </location>
</feature>
<feature type="domain" description="Helicase ATP-binding" evidence="1">
    <location>
        <begin position="31"/>
        <end position="188"/>
    </location>
</feature>
<feature type="domain" description="Helicase C-terminal" evidence="1">
    <location>
        <begin position="435"/>
        <end position="601"/>
    </location>
</feature>
<feature type="domain" description="UVR" evidence="1">
    <location>
        <begin position="626"/>
        <end position="661"/>
    </location>
</feature>
<feature type="short sequence motif" description="Beta-hairpin">
    <location>
        <begin position="97"/>
        <end position="120"/>
    </location>
</feature>
<feature type="binding site" evidence="1">
    <location>
        <begin position="44"/>
        <end position="51"/>
    </location>
    <ligand>
        <name>ATP</name>
        <dbReference type="ChEBI" id="CHEBI:30616"/>
    </ligand>
</feature>
<sequence>MINHITDNQFKLVSKYQPSGDQPQAIEQLVDNIEGGEKAQILMGATGTGKTYTMSQVISKVNKPTLVIAHNKTLAGQLYGEFKEFFPENAVEYFVSYYDYYQPEAYVPSSDTYIEKDSSVNDEIDKLRHSATSALLERNDVIVVASVSCIYGLGSPKEYADSVVSLRPGLEISRDKLLNDLVDIQFERNDIDFQRGRFRVRGDVVEIFPASRDEHAFRVEFFGDEIDRIREVEALTGQVLGEVDHLAIFPATHFVTNDDHMEVAVAKIQAELEEQLAVFEKEGKLLEAQRLKQRTEYDIEMLREMGYTNGVENYSRHMDGRSEGEPPYTLLDFFPDDFLIMIDESHMTMGQIKGMYNGDRSRKEMLVNYGFRLPSALDNRPLRREEFESHVHQIVYVSATPGDYENEQTETVIEQIIRPTGLLDPEVEVRPTMGQIDDLLGEINARVEKNERTFITTLTKKMAEDLTDYFKEMGIKVKYMHSDIKTLERTEIIRDLRLGVFDVLVGINLLREGIDVPEVSLVAILDADKEGFLRNERGLIQTIGRAARNSEGHVIMYADTVTQSMQRAIDETARRRKIQMAYNEEHGIVPQTIKKEIRDLIAVTKAVAKEEDKEVDINSLNKQERKELVKKLEKQMQEAVEVLDFELAAQIRDMMLEVKALD</sequence>
<dbReference type="EMBL" id="CP001015">
    <property type="protein sequence ID" value="ACF54909.1"/>
    <property type="molecule type" value="Genomic_DNA"/>
</dbReference>
<dbReference type="SMR" id="B5E4X3"/>
<dbReference type="KEGG" id="spx:SPG_1129"/>
<dbReference type="HOGENOM" id="CLU_009621_2_1_9"/>
<dbReference type="GO" id="GO:0005737">
    <property type="term" value="C:cytoplasm"/>
    <property type="evidence" value="ECO:0007669"/>
    <property type="project" value="UniProtKB-SubCell"/>
</dbReference>
<dbReference type="GO" id="GO:0009380">
    <property type="term" value="C:excinuclease repair complex"/>
    <property type="evidence" value="ECO:0007669"/>
    <property type="project" value="InterPro"/>
</dbReference>
<dbReference type="GO" id="GO:0005524">
    <property type="term" value="F:ATP binding"/>
    <property type="evidence" value="ECO:0007669"/>
    <property type="project" value="UniProtKB-UniRule"/>
</dbReference>
<dbReference type="GO" id="GO:0016887">
    <property type="term" value="F:ATP hydrolysis activity"/>
    <property type="evidence" value="ECO:0007669"/>
    <property type="project" value="InterPro"/>
</dbReference>
<dbReference type="GO" id="GO:0003677">
    <property type="term" value="F:DNA binding"/>
    <property type="evidence" value="ECO:0007669"/>
    <property type="project" value="UniProtKB-UniRule"/>
</dbReference>
<dbReference type="GO" id="GO:0009381">
    <property type="term" value="F:excinuclease ABC activity"/>
    <property type="evidence" value="ECO:0007669"/>
    <property type="project" value="UniProtKB-UniRule"/>
</dbReference>
<dbReference type="GO" id="GO:0004386">
    <property type="term" value="F:helicase activity"/>
    <property type="evidence" value="ECO:0007669"/>
    <property type="project" value="UniProtKB-KW"/>
</dbReference>
<dbReference type="GO" id="GO:0006289">
    <property type="term" value="P:nucleotide-excision repair"/>
    <property type="evidence" value="ECO:0007669"/>
    <property type="project" value="UniProtKB-UniRule"/>
</dbReference>
<dbReference type="GO" id="GO:0009432">
    <property type="term" value="P:SOS response"/>
    <property type="evidence" value="ECO:0007669"/>
    <property type="project" value="UniProtKB-UniRule"/>
</dbReference>
<dbReference type="CDD" id="cd17916">
    <property type="entry name" value="DEXHc_UvrB"/>
    <property type="match status" value="1"/>
</dbReference>
<dbReference type="CDD" id="cd18790">
    <property type="entry name" value="SF2_C_UvrB"/>
    <property type="match status" value="1"/>
</dbReference>
<dbReference type="Gene3D" id="3.40.50.300">
    <property type="entry name" value="P-loop containing nucleotide triphosphate hydrolases"/>
    <property type="match status" value="3"/>
</dbReference>
<dbReference type="Gene3D" id="4.10.860.10">
    <property type="entry name" value="UVR domain"/>
    <property type="match status" value="1"/>
</dbReference>
<dbReference type="HAMAP" id="MF_00204">
    <property type="entry name" value="UvrB"/>
    <property type="match status" value="1"/>
</dbReference>
<dbReference type="InterPro" id="IPR006935">
    <property type="entry name" value="Helicase/UvrB_N"/>
</dbReference>
<dbReference type="InterPro" id="IPR014001">
    <property type="entry name" value="Helicase_ATP-bd"/>
</dbReference>
<dbReference type="InterPro" id="IPR001650">
    <property type="entry name" value="Helicase_C-like"/>
</dbReference>
<dbReference type="InterPro" id="IPR027417">
    <property type="entry name" value="P-loop_NTPase"/>
</dbReference>
<dbReference type="InterPro" id="IPR001943">
    <property type="entry name" value="UVR_dom"/>
</dbReference>
<dbReference type="InterPro" id="IPR036876">
    <property type="entry name" value="UVR_dom_sf"/>
</dbReference>
<dbReference type="InterPro" id="IPR004807">
    <property type="entry name" value="UvrB"/>
</dbReference>
<dbReference type="InterPro" id="IPR041471">
    <property type="entry name" value="UvrB_inter"/>
</dbReference>
<dbReference type="InterPro" id="IPR024759">
    <property type="entry name" value="UvrB_YAD/RRR_dom"/>
</dbReference>
<dbReference type="NCBIfam" id="NF003673">
    <property type="entry name" value="PRK05298.1"/>
    <property type="match status" value="1"/>
</dbReference>
<dbReference type="NCBIfam" id="TIGR00631">
    <property type="entry name" value="uvrb"/>
    <property type="match status" value="1"/>
</dbReference>
<dbReference type="PANTHER" id="PTHR24029">
    <property type="entry name" value="UVRABC SYSTEM PROTEIN B"/>
    <property type="match status" value="1"/>
</dbReference>
<dbReference type="PANTHER" id="PTHR24029:SF0">
    <property type="entry name" value="UVRABC SYSTEM PROTEIN B"/>
    <property type="match status" value="1"/>
</dbReference>
<dbReference type="Pfam" id="PF00271">
    <property type="entry name" value="Helicase_C"/>
    <property type="match status" value="1"/>
</dbReference>
<dbReference type="Pfam" id="PF04851">
    <property type="entry name" value="ResIII"/>
    <property type="match status" value="1"/>
</dbReference>
<dbReference type="Pfam" id="PF02151">
    <property type="entry name" value="UVR"/>
    <property type="match status" value="1"/>
</dbReference>
<dbReference type="Pfam" id="PF12344">
    <property type="entry name" value="UvrB"/>
    <property type="match status" value="1"/>
</dbReference>
<dbReference type="Pfam" id="PF17757">
    <property type="entry name" value="UvrB_inter"/>
    <property type="match status" value="1"/>
</dbReference>
<dbReference type="SMART" id="SM00487">
    <property type="entry name" value="DEXDc"/>
    <property type="match status" value="1"/>
</dbReference>
<dbReference type="SMART" id="SM00490">
    <property type="entry name" value="HELICc"/>
    <property type="match status" value="1"/>
</dbReference>
<dbReference type="SUPFAM" id="SSF46600">
    <property type="entry name" value="C-terminal UvrC-binding domain of UvrB"/>
    <property type="match status" value="1"/>
</dbReference>
<dbReference type="SUPFAM" id="SSF52540">
    <property type="entry name" value="P-loop containing nucleoside triphosphate hydrolases"/>
    <property type="match status" value="2"/>
</dbReference>
<dbReference type="PROSITE" id="PS51192">
    <property type="entry name" value="HELICASE_ATP_BIND_1"/>
    <property type="match status" value="1"/>
</dbReference>
<dbReference type="PROSITE" id="PS51194">
    <property type="entry name" value="HELICASE_CTER"/>
    <property type="match status" value="1"/>
</dbReference>
<dbReference type="PROSITE" id="PS50151">
    <property type="entry name" value="UVR"/>
    <property type="match status" value="1"/>
</dbReference>
<keyword id="KW-0067">ATP-binding</keyword>
<keyword id="KW-0963">Cytoplasm</keyword>
<keyword id="KW-0227">DNA damage</keyword>
<keyword id="KW-0228">DNA excision</keyword>
<keyword id="KW-0234">DNA repair</keyword>
<keyword id="KW-0267">Excision nuclease</keyword>
<keyword id="KW-0347">Helicase</keyword>
<keyword id="KW-0378">Hydrolase</keyword>
<keyword id="KW-0547">Nucleotide-binding</keyword>
<keyword id="KW-0742">SOS response</keyword>
<comment type="function">
    <text evidence="1">The UvrABC repair system catalyzes the recognition and processing of DNA lesions. A damage recognition complex composed of 2 UvrA and 2 UvrB subunits scans DNA for abnormalities. Upon binding of the UvrA(2)B(2) complex to a putative damaged site, the DNA wraps around one UvrB monomer. DNA wrap is dependent on ATP binding by UvrB and probably causes local melting of the DNA helix, facilitating insertion of UvrB beta-hairpin between the DNA strands. Then UvrB probes one DNA strand for the presence of a lesion. If a lesion is found the UvrA subunits dissociate and the UvrB-DNA preincision complex is formed. This complex is subsequently bound by UvrC and the second UvrB is released. If no lesion is found, the DNA wraps around the other UvrB subunit that will check the other stand for damage.</text>
</comment>
<comment type="subunit">
    <text evidence="1">Forms a heterotetramer with UvrA during the search for lesions. Interacts with UvrC in an incision complex.</text>
</comment>
<comment type="subcellular location">
    <subcellularLocation>
        <location evidence="1">Cytoplasm</location>
    </subcellularLocation>
</comment>
<comment type="domain">
    <text evidence="1">The beta-hairpin motif is involved in DNA binding.</text>
</comment>
<comment type="similarity">
    <text evidence="1">Belongs to the UvrB family.</text>
</comment>